<sequence length="301" mass="32596">MNVTLRPPLAAAPRRPDGAGSVQVQMDPNLVIGTARVFSVYGKGGIGKSTTSSNLSVALSKLGKRVLQIGCDPKHDSTFTLTKRLVPTVIDILEQVNFHSEELRPDDFVYQGYNGVMCVEAGGPPAGTGCGGYVVGQTVKLLKEHHLLDDTDVVIFDVLGDVVCGGFASPLQHADRALIVAANDFDSIFAMNRIVAAIQAKSRNYPVRLGGVIANRSAATDQIDKFNERIGMKTLAHFPDLDVIRKSRLKKCTLFEMEPSPDVERAQNEYLRLAASLLAGVEPIHAVPLKDRDIFDLLGFD</sequence>
<feature type="chain" id="PRO_0000324053" description="Light-independent protochlorophyllide reductase iron-sulfur ATP-binding protein">
    <location>
        <begin position="1"/>
        <end position="301"/>
    </location>
</feature>
<feature type="region of interest" description="Disordered" evidence="2">
    <location>
        <begin position="1"/>
        <end position="22"/>
    </location>
</feature>
<feature type="compositionally biased region" description="Low complexity" evidence="2">
    <location>
        <begin position="1"/>
        <end position="13"/>
    </location>
</feature>
<feature type="binding site" evidence="1">
    <location>
        <begin position="45"/>
        <end position="50"/>
    </location>
    <ligand>
        <name>ATP</name>
        <dbReference type="ChEBI" id="CHEBI:30616"/>
    </ligand>
</feature>
<feature type="binding site" evidence="1">
    <location>
        <position position="49"/>
    </location>
    <ligand>
        <name>Mg(2+)</name>
        <dbReference type="ChEBI" id="CHEBI:18420"/>
    </ligand>
</feature>
<feature type="binding site" evidence="1">
    <location>
        <position position="74"/>
    </location>
    <ligand>
        <name>ATP</name>
        <dbReference type="ChEBI" id="CHEBI:30616"/>
    </ligand>
</feature>
<feature type="binding site" evidence="1">
    <location>
        <position position="130"/>
    </location>
    <ligand>
        <name>[4Fe-4S] cluster</name>
        <dbReference type="ChEBI" id="CHEBI:49883"/>
        <note>ligand shared between dimeric partners</note>
    </ligand>
</feature>
<feature type="binding site" evidence="1">
    <location>
        <position position="164"/>
    </location>
    <ligand>
        <name>[4Fe-4S] cluster</name>
        <dbReference type="ChEBI" id="CHEBI:49883"/>
        <note>ligand shared between dimeric partners</note>
    </ligand>
</feature>
<feature type="binding site" evidence="1">
    <location>
        <begin position="215"/>
        <end position="216"/>
    </location>
    <ligand>
        <name>ATP</name>
        <dbReference type="ChEBI" id="CHEBI:30616"/>
    </ligand>
</feature>
<feature type="binding site" evidence="1">
    <location>
        <begin position="239"/>
        <end position="241"/>
    </location>
    <ligand>
        <name>ATP</name>
        <dbReference type="ChEBI" id="CHEBI:30616"/>
    </ligand>
</feature>
<dbReference type="EC" id="1.3.7.7" evidence="1"/>
<dbReference type="EMBL" id="CU234118">
    <property type="protein sequence ID" value="CAL75520.1"/>
    <property type="molecule type" value="Genomic_DNA"/>
</dbReference>
<dbReference type="RefSeq" id="WP_008963070.1">
    <property type="nucleotide sequence ID" value="NC_009445.1"/>
</dbReference>
<dbReference type="SMR" id="A4YNP4"/>
<dbReference type="STRING" id="114615.BRADO1642"/>
<dbReference type="KEGG" id="bra:BRADO1642"/>
<dbReference type="eggNOG" id="COG1348">
    <property type="taxonomic scope" value="Bacteria"/>
</dbReference>
<dbReference type="HOGENOM" id="CLU_059373_2_0_5"/>
<dbReference type="OrthoDB" id="9778641at2"/>
<dbReference type="UniPathway" id="UPA00671"/>
<dbReference type="Proteomes" id="UP000001994">
    <property type="component" value="Chromosome"/>
</dbReference>
<dbReference type="GO" id="GO:0051539">
    <property type="term" value="F:4 iron, 4 sulfur cluster binding"/>
    <property type="evidence" value="ECO:0007669"/>
    <property type="project" value="UniProtKB-UniRule"/>
</dbReference>
<dbReference type="GO" id="GO:0005524">
    <property type="term" value="F:ATP binding"/>
    <property type="evidence" value="ECO:0007669"/>
    <property type="project" value="UniProtKB-UniRule"/>
</dbReference>
<dbReference type="GO" id="GO:0046872">
    <property type="term" value="F:metal ion binding"/>
    <property type="evidence" value="ECO:0007669"/>
    <property type="project" value="UniProtKB-KW"/>
</dbReference>
<dbReference type="GO" id="GO:0016730">
    <property type="term" value="F:oxidoreductase activity, acting on iron-sulfur proteins as donors"/>
    <property type="evidence" value="ECO:0007669"/>
    <property type="project" value="InterPro"/>
</dbReference>
<dbReference type="GO" id="GO:0016636">
    <property type="term" value="F:oxidoreductase activity, acting on the CH-CH group of donors, iron-sulfur protein as acceptor"/>
    <property type="evidence" value="ECO:0007669"/>
    <property type="project" value="UniProtKB-UniRule"/>
</dbReference>
<dbReference type="GO" id="GO:0036070">
    <property type="term" value="P:light-independent bacteriochlorophyll biosynthetic process"/>
    <property type="evidence" value="ECO:0007669"/>
    <property type="project" value="UniProtKB-UniRule"/>
</dbReference>
<dbReference type="GO" id="GO:0019685">
    <property type="term" value="P:photosynthesis, dark reaction"/>
    <property type="evidence" value="ECO:0007669"/>
    <property type="project" value="InterPro"/>
</dbReference>
<dbReference type="CDD" id="cd02032">
    <property type="entry name" value="Bchl-like"/>
    <property type="match status" value="1"/>
</dbReference>
<dbReference type="Gene3D" id="3.40.50.300">
    <property type="entry name" value="P-loop containing nucleotide triphosphate hydrolases"/>
    <property type="match status" value="1"/>
</dbReference>
<dbReference type="HAMAP" id="MF_00355">
    <property type="entry name" value="ChlL_BchL"/>
    <property type="match status" value="1"/>
</dbReference>
<dbReference type="InterPro" id="IPR030655">
    <property type="entry name" value="NifH/chlL_CS"/>
</dbReference>
<dbReference type="InterPro" id="IPR000392">
    <property type="entry name" value="NifH/frxC"/>
</dbReference>
<dbReference type="InterPro" id="IPR027417">
    <property type="entry name" value="P-loop_NTPase"/>
</dbReference>
<dbReference type="InterPro" id="IPR005971">
    <property type="entry name" value="Protochlorophyllide_ATP-bd"/>
</dbReference>
<dbReference type="NCBIfam" id="TIGR01281">
    <property type="entry name" value="DPOR_bchL"/>
    <property type="match status" value="1"/>
</dbReference>
<dbReference type="PANTHER" id="PTHR42864">
    <property type="entry name" value="LIGHT-INDEPENDENT PROTOCHLOROPHYLLIDE REDUCTASE IRON-SULFUR ATP-BINDING PROTEIN"/>
    <property type="match status" value="1"/>
</dbReference>
<dbReference type="PANTHER" id="PTHR42864:SF2">
    <property type="entry name" value="LIGHT-INDEPENDENT PROTOCHLOROPHYLLIDE REDUCTASE IRON-SULFUR ATP-BINDING PROTEIN"/>
    <property type="match status" value="1"/>
</dbReference>
<dbReference type="Pfam" id="PF00142">
    <property type="entry name" value="Fer4_NifH"/>
    <property type="match status" value="1"/>
</dbReference>
<dbReference type="PIRSF" id="PIRSF000363">
    <property type="entry name" value="Nitrogenase_iron"/>
    <property type="match status" value="1"/>
</dbReference>
<dbReference type="PRINTS" id="PR00091">
    <property type="entry name" value="NITROGNASEII"/>
</dbReference>
<dbReference type="SUPFAM" id="SSF52540">
    <property type="entry name" value="P-loop containing nucleoside triphosphate hydrolases"/>
    <property type="match status" value="1"/>
</dbReference>
<dbReference type="PROSITE" id="PS00746">
    <property type="entry name" value="NIFH_FRXC_1"/>
    <property type="match status" value="1"/>
</dbReference>
<dbReference type="PROSITE" id="PS00692">
    <property type="entry name" value="NIFH_FRXC_2"/>
    <property type="match status" value="1"/>
</dbReference>
<dbReference type="PROSITE" id="PS51026">
    <property type="entry name" value="NIFH_FRXC_3"/>
    <property type="match status" value="1"/>
</dbReference>
<accession>A4YNP4</accession>
<proteinExistence type="inferred from homology"/>
<gene>
    <name evidence="1" type="primary">bchL</name>
    <name type="ordered locus">BRADO1642</name>
</gene>
<protein>
    <recommendedName>
        <fullName evidence="1">Light-independent protochlorophyllide reductase iron-sulfur ATP-binding protein</fullName>
        <shortName evidence="1">DPOR subunit L</shortName>
        <shortName evidence="1">LI-POR subunit L</shortName>
        <ecNumber evidence="1">1.3.7.7</ecNumber>
    </recommendedName>
</protein>
<name>BCHL_BRASO</name>
<organism>
    <name type="scientific">Bradyrhizobium sp. (strain ORS 278)</name>
    <dbReference type="NCBI Taxonomy" id="114615"/>
    <lineage>
        <taxon>Bacteria</taxon>
        <taxon>Pseudomonadati</taxon>
        <taxon>Pseudomonadota</taxon>
        <taxon>Alphaproteobacteria</taxon>
        <taxon>Hyphomicrobiales</taxon>
        <taxon>Nitrobacteraceae</taxon>
        <taxon>Bradyrhizobium</taxon>
    </lineage>
</organism>
<evidence type="ECO:0000255" key="1">
    <source>
        <dbReference type="HAMAP-Rule" id="MF_00355"/>
    </source>
</evidence>
<evidence type="ECO:0000256" key="2">
    <source>
        <dbReference type="SAM" id="MobiDB-lite"/>
    </source>
</evidence>
<reference key="1">
    <citation type="journal article" date="2007" name="Science">
        <title>Legumes symbioses: absence of nod genes in photosynthetic bradyrhizobia.</title>
        <authorList>
            <person name="Giraud E."/>
            <person name="Moulin L."/>
            <person name="Vallenet D."/>
            <person name="Barbe V."/>
            <person name="Cytryn E."/>
            <person name="Avarre J.-C."/>
            <person name="Jaubert M."/>
            <person name="Simon D."/>
            <person name="Cartieaux F."/>
            <person name="Prin Y."/>
            <person name="Bena G."/>
            <person name="Hannibal L."/>
            <person name="Fardoux J."/>
            <person name="Kojadinovic M."/>
            <person name="Vuillet L."/>
            <person name="Lajus A."/>
            <person name="Cruveiller S."/>
            <person name="Rouy Z."/>
            <person name="Mangenot S."/>
            <person name="Segurens B."/>
            <person name="Dossat C."/>
            <person name="Franck W.L."/>
            <person name="Chang W.-S."/>
            <person name="Saunders E."/>
            <person name="Bruce D."/>
            <person name="Richardson P."/>
            <person name="Normand P."/>
            <person name="Dreyfus B."/>
            <person name="Pignol D."/>
            <person name="Stacey G."/>
            <person name="Emerich D."/>
            <person name="Vermeglio A."/>
            <person name="Medigue C."/>
            <person name="Sadowsky M."/>
        </authorList>
    </citation>
    <scope>NUCLEOTIDE SEQUENCE [LARGE SCALE GENOMIC DNA]</scope>
    <source>
        <strain>ORS 278</strain>
    </source>
</reference>
<keyword id="KW-0004">4Fe-4S</keyword>
<keyword id="KW-0067">ATP-binding</keyword>
<keyword id="KW-0077">Bacteriochlorophyll biosynthesis</keyword>
<keyword id="KW-0149">Chlorophyll biosynthesis</keyword>
<keyword id="KW-0408">Iron</keyword>
<keyword id="KW-0411">Iron-sulfur</keyword>
<keyword id="KW-0460">Magnesium</keyword>
<keyword id="KW-0479">Metal-binding</keyword>
<keyword id="KW-0547">Nucleotide-binding</keyword>
<keyword id="KW-0560">Oxidoreductase</keyword>
<keyword id="KW-0602">Photosynthesis</keyword>
<keyword id="KW-1185">Reference proteome</keyword>
<comment type="function">
    <text evidence="1">Component of the dark-operative protochlorophyllide reductase (DPOR) that uses Mg-ATP and reduced ferredoxin to reduce ring D of protochlorophyllide (Pchlide) to form chlorophyllide a (Chlide). This reaction is light-independent. The L component serves as a unique electron donor to the NB-component of the complex, and binds Mg-ATP.</text>
</comment>
<comment type="catalytic activity">
    <reaction evidence="1">
        <text>chlorophyllide a + oxidized 2[4Fe-4S]-[ferredoxin] + 2 ADP + 2 phosphate = protochlorophyllide a + reduced 2[4Fe-4S]-[ferredoxin] + 2 ATP + 2 H2O</text>
        <dbReference type="Rhea" id="RHEA:28202"/>
        <dbReference type="Rhea" id="RHEA-COMP:10002"/>
        <dbReference type="Rhea" id="RHEA-COMP:10004"/>
        <dbReference type="ChEBI" id="CHEBI:15377"/>
        <dbReference type="ChEBI" id="CHEBI:30616"/>
        <dbReference type="ChEBI" id="CHEBI:33722"/>
        <dbReference type="ChEBI" id="CHEBI:33723"/>
        <dbReference type="ChEBI" id="CHEBI:43474"/>
        <dbReference type="ChEBI" id="CHEBI:83348"/>
        <dbReference type="ChEBI" id="CHEBI:83350"/>
        <dbReference type="ChEBI" id="CHEBI:456216"/>
        <dbReference type="EC" id="1.3.7.7"/>
    </reaction>
</comment>
<comment type="cofactor">
    <cofactor evidence="1">
        <name>[4Fe-4S] cluster</name>
        <dbReference type="ChEBI" id="CHEBI:49883"/>
    </cofactor>
    <text evidence="1">Binds 1 [4Fe-4S] cluster per dimer.</text>
</comment>
<comment type="pathway">
    <text evidence="1">Porphyrin-containing compound metabolism; bacteriochlorophyll biosynthesis (light-independent).</text>
</comment>
<comment type="subunit">
    <text evidence="1">Homodimer. Protochlorophyllide reductase is composed of three subunits; BchL, BchN and BchB.</text>
</comment>
<comment type="similarity">
    <text evidence="1">Belongs to the NifH/BchL/ChlL family.</text>
</comment>